<gene>
    <name evidence="1" type="primary">atpA</name>
    <name type="ordered locus">Fjoh_1059</name>
</gene>
<organism>
    <name type="scientific">Flavobacterium johnsoniae (strain ATCC 17061 / DSM 2064 / JCM 8514 / BCRC 14874 / CCUG 350202 / NBRC 14942 / NCIMB 11054 / UW101)</name>
    <name type="common">Cytophaga johnsonae</name>
    <dbReference type="NCBI Taxonomy" id="376686"/>
    <lineage>
        <taxon>Bacteria</taxon>
        <taxon>Pseudomonadati</taxon>
        <taxon>Bacteroidota</taxon>
        <taxon>Flavobacteriia</taxon>
        <taxon>Flavobacteriales</taxon>
        <taxon>Flavobacteriaceae</taxon>
        <taxon>Flavobacterium</taxon>
    </lineage>
</organism>
<comment type="function">
    <text evidence="1">Produces ATP from ADP in the presence of a proton gradient across the membrane. The alpha chain is a regulatory subunit.</text>
</comment>
<comment type="catalytic activity">
    <reaction evidence="1">
        <text>ATP + H2O + 4 H(+)(in) = ADP + phosphate + 5 H(+)(out)</text>
        <dbReference type="Rhea" id="RHEA:57720"/>
        <dbReference type="ChEBI" id="CHEBI:15377"/>
        <dbReference type="ChEBI" id="CHEBI:15378"/>
        <dbReference type="ChEBI" id="CHEBI:30616"/>
        <dbReference type="ChEBI" id="CHEBI:43474"/>
        <dbReference type="ChEBI" id="CHEBI:456216"/>
        <dbReference type="EC" id="7.1.2.2"/>
    </reaction>
</comment>
<comment type="subunit">
    <text evidence="1">F-type ATPases have 2 components, CF(1) - the catalytic core - and CF(0) - the membrane proton channel. CF(1) has five subunits: alpha(3), beta(3), gamma(1), delta(1), epsilon(1). CF(0) has three main subunits: a(1), b(2) and c(9-12). The alpha and beta chains form an alternating ring which encloses part of the gamma chain. CF(1) is attached to CF(0) by a central stalk formed by the gamma and epsilon chains, while a peripheral stalk is formed by the delta and b chains.</text>
</comment>
<comment type="subcellular location">
    <subcellularLocation>
        <location evidence="1">Cell inner membrane</location>
        <topology evidence="1">Peripheral membrane protein</topology>
    </subcellularLocation>
</comment>
<comment type="similarity">
    <text evidence="1">Belongs to the ATPase alpha/beta chains family.</text>
</comment>
<feature type="chain" id="PRO_1000086878" description="ATP synthase subunit alpha">
    <location>
        <begin position="1"/>
        <end position="525"/>
    </location>
</feature>
<feature type="binding site" evidence="1">
    <location>
        <begin position="171"/>
        <end position="178"/>
    </location>
    <ligand>
        <name>ATP</name>
        <dbReference type="ChEBI" id="CHEBI:30616"/>
    </ligand>
</feature>
<feature type="site" description="Required for activity" evidence="1">
    <location>
        <position position="387"/>
    </location>
</feature>
<protein>
    <recommendedName>
        <fullName evidence="1">ATP synthase subunit alpha</fullName>
        <ecNumber evidence="1">7.1.2.2</ecNumber>
    </recommendedName>
    <alternativeName>
        <fullName evidence="1">ATP synthase F1 sector subunit alpha</fullName>
    </alternativeName>
    <alternativeName>
        <fullName evidence="1">F-ATPase subunit alpha</fullName>
    </alternativeName>
</protein>
<reference key="1">
    <citation type="journal article" date="2009" name="Appl. Environ. Microbiol.">
        <title>Novel features of the polysaccharide-digesting gliding bacterium Flavobacterium johnsoniae as revealed by genome sequence analysis.</title>
        <authorList>
            <person name="McBride M.J."/>
            <person name="Xie G."/>
            <person name="Martens E.C."/>
            <person name="Lapidus A."/>
            <person name="Henrissat B."/>
            <person name="Rhodes R.G."/>
            <person name="Goltsman E."/>
            <person name="Wang W."/>
            <person name="Xu J."/>
            <person name="Hunnicutt D.W."/>
            <person name="Staroscik A.M."/>
            <person name="Hoover T.R."/>
            <person name="Cheng Y.Q."/>
            <person name="Stein J.L."/>
        </authorList>
    </citation>
    <scope>NUCLEOTIDE SEQUENCE [LARGE SCALE GENOMIC DNA]</scope>
    <source>
        <strain>ATCC 17061 / DSM 2064 / JCM 8514 / BCRC 14874 / CCUG 350202 / NBRC 14942 / NCIMB 11054 / UW101</strain>
    </source>
</reference>
<sequence length="525" mass="56456">MAEIKPAEISAILRKQVEGFESGATLEEVGTVLQVGDGIARVYGLSNVQYGELVEFDNGMEGIVLNLEEDNVGVVLLGPSTGIKEGSTAKRTQRIASLKVGEQMVGRVVNTLGFPIDGKGPIGGDLYEMPLERKAPGVIFRQPVTEPLQTGVKAVDAMIPVGRGQRELVIGDRQTGKSTVCIDTILNQKEFYDAGKPVFCIYVAIGQKASTVAGIAKMLEEKGAMAYTVIVAANASDPAPMQVYAPFAGAAIGEYFRDSGRPALIVYDDLSKQAVAYREVSLLLRRPPGREAYPGDVFYLHSRLLERACKVIADDGIAKNMNDLPESIKPIVKGGGSLTALPIIETQAGDVSAYIPTNVISITDGQIFLDGDLFNSGVRPAINVGISVSRVGGNAQIKSMKKVSGTLKLDQAQFRELEAFAKFGSDLDSVTLNVIEKGKRNVEILKQGLNDPYTVENQVAIIYAGSKNLLRNVPVEKVKEFEADFLAYLNSKHKDTLNALKAGKLDDSITDVIEKAAKEISAKYN</sequence>
<name>ATPA_FLAJ1</name>
<keyword id="KW-0066">ATP synthesis</keyword>
<keyword id="KW-0067">ATP-binding</keyword>
<keyword id="KW-0997">Cell inner membrane</keyword>
<keyword id="KW-1003">Cell membrane</keyword>
<keyword id="KW-0139">CF(1)</keyword>
<keyword id="KW-0375">Hydrogen ion transport</keyword>
<keyword id="KW-0406">Ion transport</keyword>
<keyword id="KW-0472">Membrane</keyword>
<keyword id="KW-0547">Nucleotide-binding</keyword>
<keyword id="KW-1278">Translocase</keyword>
<keyword id="KW-0813">Transport</keyword>
<accession>A5FL34</accession>
<dbReference type="EC" id="7.1.2.2" evidence="1"/>
<dbReference type="EMBL" id="CP000685">
    <property type="protein sequence ID" value="ABQ04092.1"/>
    <property type="molecule type" value="Genomic_DNA"/>
</dbReference>
<dbReference type="RefSeq" id="WP_012023144.1">
    <property type="nucleotide sequence ID" value="NC_009441.1"/>
</dbReference>
<dbReference type="SMR" id="A5FL34"/>
<dbReference type="STRING" id="376686.Fjoh_1059"/>
<dbReference type="KEGG" id="fjo:Fjoh_1059"/>
<dbReference type="eggNOG" id="COG0056">
    <property type="taxonomic scope" value="Bacteria"/>
</dbReference>
<dbReference type="HOGENOM" id="CLU_010091_2_1_10"/>
<dbReference type="OrthoDB" id="9803053at2"/>
<dbReference type="Proteomes" id="UP000006694">
    <property type="component" value="Chromosome"/>
</dbReference>
<dbReference type="GO" id="GO:0005886">
    <property type="term" value="C:plasma membrane"/>
    <property type="evidence" value="ECO:0007669"/>
    <property type="project" value="UniProtKB-SubCell"/>
</dbReference>
<dbReference type="GO" id="GO:0045259">
    <property type="term" value="C:proton-transporting ATP synthase complex"/>
    <property type="evidence" value="ECO:0007669"/>
    <property type="project" value="UniProtKB-KW"/>
</dbReference>
<dbReference type="GO" id="GO:0043531">
    <property type="term" value="F:ADP binding"/>
    <property type="evidence" value="ECO:0007669"/>
    <property type="project" value="TreeGrafter"/>
</dbReference>
<dbReference type="GO" id="GO:0005524">
    <property type="term" value="F:ATP binding"/>
    <property type="evidence" value="ECO:0007669"/>
    <property type="project" value="UniProtKB-UniRule"/>
</dbReference>
<dbReference type="GO" id="GO:0046933">
    <property type="term" value="F:proton-transporting ATP synthase activity, rotational mechanism"/>
    <property type="evidence" value="ECO:0007669"/>
    <property type="project" value="UniProtKB-UniRule"/>
</dbReference>
<dbReference type="CDD" id="cd18113">
    <property type="entry name" value="ATP-synt_F1_alpha_C"/>
    <property type="match status" value="1"/>
</dbReference>
<dbReference type="CDD" id="cd18116">
    <property type="entry name" value="ATP-synt_F1_alpha_N"/>
    <property type="match status" value="1"/>
</dbReference>
<dbReference type="CDD" id="cd01132">
    <property type="entry name" value="F1-ATPase_alpha_CD"/>
    <property type="match status" value="1"/>
</dbReference>
<dbReference type="FunFam" id="1.20.150.20:FF:000001">
    <property type="entry name" value="ATP synthase subunit alpha"/>
    <property type="match status" value="1"/>
</dbReference>
<dbReference type="FunFam" id="2.40.30.20:FF:000001">
    <property type="entry name" value="ATP synthase subunit alpha"/>
    <property type="match status" value="1"/>
</dbReference>
<dbReference type="FunFam" id="3.40.50.300:FF:000002">
    <property type="entry name" value="ATP synthase subunit alpha"/>
    <property type="match status" value="1"/>
</dbReference>
<dbReference type="Gene3D" id="2.40.30.20">
    <property type="match status" value="1"/>
</dbReference>
<dbReference type="Gene3D" id="1.20.150.20">
    <property type="entry name" value="ATP synthase alpha/beta chain, C-terminal domain"/>
    <property type="match status" value="1"/>
</dbReference>
<dbReference type="Gene3D" id="3.40.50.300">
    <property type="entry name" value="P-loop containing nucleotide triphosphate hydrolases"/>
    <property type="match status" value="1"/>
</dbReference>
<dbReference type="HAMAP" id="MF_01346">
    <property type="entry name" value="ATP_synth_alpha_bact"/>
    <property type="match status" value="1"/>
</dbReference>
<dbReference type="InterPro" id="IPR023366">
    <property type="entry name" value="ATP_synth_asu-like_sf"/>
</dbReference>
<dbReference type="InterPro" id="IPR000793">
    <property type="entry name" value="ATP_synth_asu_C"/>
</dbReference>
<dbReference type="InterPro" id="IPR038376">
    <property type="entry name" value="ATP_synth_asu_C_sf"/>
</dbReference>
<dbReference type="InterPro" id="IPR033732">
    <property type="entry name" value="ATP_synth_F1_a_nt-bd_dom"/>
</dbReference>
<dbReference type="InterPro" id="IPR005294">
    <property type="entry name" value="ATP_synth_F1_asu"/>
</dbReference>
<dbReference type="InterPro" id="IPR020003">
    <property type="entry name" value="ATPase_a/bsu_AS"/>
</dbReference>
<dbReference type="InterPro" id="IPR004100">
    <property type="entry name" value="ATPase_F1/V1/A1_a/bsu_N"/>
</dbReference>
<dbReference type="InterPro" id="IPR036121">
    <property type="entry name" value="ATPase_F1/V1/A1_a/bsu_N_sf"/>
</dbReference>
<dbReference type="InterPro" id="IPR000194">
    <property type="entry name" value="ATPase_F1/V1/A1_a/bsu_nucl-bd"/>
</dbReference>
<dbReference type="InterPro" id="IPR027417">
    <property type="entry name" value="P-loop_NTPase"/>
</dbReference>
<dbReference type="NCBIfam" id="TIGR00962">
    <property type="entry name" value="atpA"/>
    <property type="match status" value="1"/>
</dbReference>
<dbReference type="NCBIfam" id="NF009884">
    <property type="entry name" value="PRK13343.1"/>
    <property type="match status" value="1"/>
</dbReference>
<dbReference type="PANTHER" id="PTHR48082">
    <property type="entry name" value="ATP SYNTHASE SUBUNIT ALPHA, MITOCHONDRIAL"/>
    <property type="match status" value="1"/>
</dbReference>
<dbReference type="PANTHER" id="PTHR48082:SF2">
    <property type="entry name" value="ATP SYNTHASE SUBUNIT ALPHA, MITOCHONDRIAL"/>
    <property type="match status" value="1"/>
</dbReference>
<dbReference type="Pfam" id="PF00006">
    <property type="entry name" value="ATP-synt_ab"/>
    <property type="match status" value="1"/>
</dbReference>
<dbReference type="Pfam" id="PF00306">
    <property type="entry name" value="ATP-synt_ab_C"/>
    <property type="match status" value="1"/>
</dbReference>
<dbReference type="Pfam" id="PF02874">
    <property type="entry name" value="ATP-synt_ab_N"/>
    <property type="match status" value="1"/>
</dbReference>
<dbReference type="PIRSF" id="PIRSF039088">
    <property type="entry name" value="F_ATPase_subunit_alpha"/>
    <property type="match status" value="1"/>
</dbReference>
<dbReference type="SUPFAM" id="SSF47917">
    <property type="entry name" value="C-terminal domain of alpha and beta subunits of F1 ATP synthase"/>
    <property type="match status" value="1"/>
</dbReference>
<dbReference type="SUPFAM" id="SSF50615">
    <property type="entry name" value="N-terminal domain of alpha and beta subunits of F1 ATP synthase"/>
    <property type="match status" value="1"/>
</dbReference>
<dbReference type="SUPFAM" id="SSF52540">
    <property type="entry name" value="P-loop containing nucleoside triphosphate hydrolases"/>
    <property type="match status" value="1"/>
</dbReference>
<dbReference type="PROSITE" id="PS00152">
    <property type="entry name" value="ATPASE_ALPHA_BETA"/>
    <property type="match status" value="1"/>
</dbReference>
<proteinExistence type="inferred from homology"/>
<evidence type="ECO:0000255" key="1">
    <source>
        <dbReference type="HAMAP-Rule" id="MF_01346"/>
    </source>
</evidence>